<gene>
    <name evidence="9" type="primary">Mgat4d</name>
</gene>
<proteinExistence type="evidence at protein level"/>
<protein>
    <recommendedName>
        <fullName evidence="6">Alpha-1,3-mannosyl-glycoprotein 4-beta-N-acetylglucosaminyltransferase-like protein MGAT4D</fullName>
    </recommendedName>
    <alternativeName>
        <fullName>N-acetylglucosaminyltransferase MGAT1 inhibitory protein</fullName>
        <shortName evidence="5">GlcNAcT-I inhibitory protein</shortName>
        <shortName evidence="5">GnT1IP</shortName>
    </alternativeName>
</protein>
<dbReference type="EMBL" id="HM067443">
    <property type="protein sequence ID" value="ADL28272.1"/>
    <property type="molecule type" value="mRNA"/>
</dbReference>
<dbReference type="EMBL" id="AK016272">
    <property type="protein sequence ID" value="BAB30173.1"/>
    <property type="molecule type" value="mRNA"/>
</dbReference>
<dbReference type="EMBL" id="AC155304">
    <property type="status" value="NOT_ANNOTATED_CDS"/>
    <property type="molecule type" value="Genomic_DNA"/>
</dbReference>
<dbReference type="CCDS" id="CCDS22451.1">
    <molecule id="Q9D4R2-1"/>
</dbReference>
<dbReference type="RefSeq" id="NP_080509.2">
    <molecule id="Q9D4R2-1"/>
    <property type="nucleotide sequence ID" value="NM_026233.2"/>
</dbReference>
<dbReference type="SMR" id="Q9D4R2"/>
<dbReference type="FunCoup" id="Q9D4R2">
    <property type="interactions" value="67"/>
</dbReference>
<dbReference type="STRING" id="10090.ENSMUSP00000041629"/>
<dbReference type="CAZy" id="GT54">
    <property type="family name" value="Glycosyltransferase Family 54"/>
</dbReference>
<dbReference type="GlyCosmos" id="Q9D4R2">
    <property type="glycosylation" value="3 sites, No reported glycans"/>
</dbReference>
<dbReference type="GlyGen" id="Q9D4R2">
    <property type="glycosylation" value="3 sites"/>
</dbReference>
<dbReference type="PhosphoSitePlus" id="Q9D4R2"/>
<dbReference type="SwissPalm" id="Q9D4R2"/>
<dbReference type="PaxDb" id="10090-ENSMUSP00000041629"/>
<dbReference type="ProteomicsDB" id="290227">
    <molecule id="Q9D4R2-1"/>
</dbReference>
<dbReference type="ProteomicsDB" id="290228">
    <molecule id="Q9D4R2-2"/>
</dbReference>
<dbReference type="Antibodypedia" id="50004">
    <property type="antibodies" value="63 antibodies from 14 providers"/>
</dbReference>
<dbReference type="DNASU" id="67555"/>
<dbReference type="Ensembl" id="ENSMUST00000038692.6">
    <molecule id="Q9D4R2-1"/>
    <property type="protein sequence ID" value="ENSMUSP00000041629.6"/>
    <property type="gene ID" value="ENSMUSG00000035057.8"/>
</dbReference>
<dbReference type="GeneID" id="67555"/>
<dbReference type="KEGG" id="mmu:67555"/>
<dbReference type="UCSC" id="uc009mkb.1">
    <molecule id="Q9D4R2-1"/>
    <property type="organism name" value="mouse"/>
</dbReference>
<dbReference type="AGR" id="MGI:1914805"/>
<dbReference type="CTD" id="152586"/>
<dbReference type="MGI" id="MGI:1914805">
    <property type="gene designation" value="Mgat4d"/>
</dbReference>
<dbReference type="VEuPathDB" id="HostDB:ENSMUSG00000035057"/>
<dbReference type="eggNOG" id="ENOG502QPQJ">
    <property type="taxonomic scope" value="Eukaryota"/>
</dbReference>
<dbReference type="GeneTree" id="ENSGT00940000161998"/>
<dbReference type="HOGENOM" id="CLU_027046_2_0_1"/>
<dbReference type="InParanoid" id="Q9D4R2"/>
<dbReference type="OMA" id="QPKARYY"/>
<dbReference type="OrthoDB" id="2016523at2759"/>
<dbReference type="PhylomeDB" id="Q9D4R2"/>
<dbReference type="TreeFam" id="TF324570"/>
<dbReference type="BioGRID-ORCS" id="67555">
    <property type="hits" value="2 hits in 76 CRISPR screens"/>
</dbReference>
<dbReference type="PRO" id="PR:Q9D4R2"/>
<dbReference type="Proteomes" id="UP000000589">
    <property type="component" value="Chromosome 8"/>
</dbReference>
<dbReference type="RNAct" id="Q9D4R2">
    <property type="molecule type" value="protein"/>
</dbReference>
<dbReference type="Bgee" id="ENSMUSG00000035057">
    <property type="expression patterns" value="Expressed in spermatocyte and 8 other cell types or tissues"/>
</dbReference>
<dbReference type="GO" id="GO:0005783">
    <property type="term" value="C:endoplasmic reticulum"/>
    <property type="evidence" value="ECO:0000314"/>
    <property type="project" value="UniProtKB"/>
</dbReference>
<dbReference type="GO" id="GO:0005789">
    <property type="term" value="C:endoplasmic reticulum membrane"/>
    <property type="evidence" value="ECO:0007669"/>
    <property type="project" value="UniProtKB-SubCell"/>
</dbReference>
<dbReference type="GO" id="GO:0005793">
    <property type="term" value="C:endoplasmic reticulum-Golgi intermediate compartment"/>
    <property type="evidence" value="ECO:0000314"/>
    <property type="project" value="UniProtKB"/>
</dbReference>
<dbReference type="GO" id="GO:0033116">
    <property type="term" value="C:endoplasmic reticulum-Golgi intermediate compartment membrane"/>
    <property type="evidence" value="ECO:0007669"/>
    <property type="project" value="UniProtKB-SubCell"/>
</dbReference>
<dbReference type="GO" id="GO:0000139">
    <property type="term" value="C:Golgi membrane"/>
    <property type="evidence" value="ECO:0007669"/>
    <property type="project" value="UniProtKB-SubCell"/>
</dbReference>
<dbReference type="GO" id="GO:0005795">
    <property type="term" value="C:Golgi stack"/>
    <property type="evidence" value="ECO:0000314"/>
    <property type="project" value="UniProtKB"/>
</dbReference>
<dbReference type="GO" id="GO:0016020">
    <property type="term" value="C:membrane"/>
    <property type="evidence" value="ECO:0000314"/>
    <property type="project" value="UniProtKB"/>
</dbReference>
<dbReference type="GO" id="GO:0030154">
    <property type="term" value="P:cell differentiation"/>
    <property type="evidence" value="ECO:0007669"/>
    <property type="project" value="UniProtKB-KW"/>
</dbReference>
<dbReference type="GO" id="GO:0060051">
    <property type="term" value="P:negative regulation of protein glycosylation"/>
    <property type="evidence" value="ECO:0000314"/>
    <property type="project" value="UniProtKB"/>
</dbReference>
<dbReference type="GO" id="GO:0007283">
    <property type="term" value="P:spermatogenesis"/>
    <property type="evidence" value="ECO:0007669"/>
    <property type="project" value="UniProtKB-KW"/>
</dbReference>
<dbReference type="InterPro" id="IPR006759">
    <property type="entry name" value="Glyco_transf_54"/>
</dbReference>
<dbReference type="PANTHER" id="PTHR12062:SF10">
    <property type="entry name" value="ALPHA-1,3-MANNOSYL-GLYCOPROTEIN 4-BETA-N-ACETYLGLUCOSAMINYLTRANSFERASE-LIKE PROTEIN MGAT4D"/>
    <property type="match status" value="1"/>
</dbReference>
<dbReference type="PANTHER" id="PTHR12062">
    <property type="entry name" value="N-ACETYLGLUCOSAMINYLTRANSFERASE VI"/>
    <property type="match status" value="1"/>
</dbReference>
<dbReference type="Pfam" id="PF04666">
    <property type="entry name" value="MGAT4_cons"/>
    <property type="match status" value="1"/>
</dbReference>
<feature type="chain" id="PRO_0000311677" description="Alpha-1,3-mannosyl-glycoprotein 4-beta-N-acetylglucosaminyltransferase-like protein MGAT4D">
    <location>
        <begin position="1"/>
        <end position="373"/>
    </location>
</feature>
<feature type="topological domain" description="Cytoplasmic" evidence="2">
    <location>
        <begin position="1"/>
        <end position="5"/>
    </location>
</feature>
<feature type="transmembrane region" description="Helical; Signal-anchor for type II membrane protein" evidence="2">
    <location>
        <begin position="6"/>
        <end position="26"/>
    </location>
</feature>
<feature type="topological domain" description="Lumenal" evidence="2">
    <location>
        <begin position="27"/>
        <end position="373"/>
    </location>
</feature>
<feature type="glycosylation site" description="N-linked (GlcNAc...) asparagine" evidence="2">
    <location>
        <position position="29"/>
    </location>
</feature>
<feature type="glycosylation site" description="N-linked (GlcNAc...) asparagine" evidence="2">
    <location>
        <position position="54"/>
    </location>
</feature>
<feature type="glycosylation site" description="N-linked (GlcNAc...) asparagine" evidence="2">
    <location>
        <position position="144"/>
    </location>
</feature>
<feature type="splice variant" id="VSP_058925" description="In isoform 2.">
    <original>M</original>
    <variation>MCLGESVGDLRTVATAPWEGEQARGVKDAGSVPVQPGVGSDAATM</variation>
    <location>
        <position position="1"/>
    </location>
</feature>
<feature type="sequence conflict" description="In Ref. 2; BAB30173." evidence="6" ref="2">
    <original>N</original>
    <variation>D</variation>
    <location>
        <position position="5"/>
    </location>
</feature>
<feature type="sequence conflict" description="In Ref. 2; BAB30173." evidence="6" ref="2">
    <original>D</original>
    <variation>G</variation>
    <location>
        <position position="166"/>
    </location>
</feature>
<name>MGT4D_MOUSE</name>
<sequence length="373" mass="43300">MKAKNVNLLFAFVAVLLFGFSCFCISRMNQTNNQLINCRNHVLEFKEIMLRLKNKSENHHQDLMQVLYQMKRKAAHTTRSSGNFLEKKGSILSQHETLPNQFEVLKYFLPHLRTAGKLYPAIATSKGRAGVSFALGISTINRGNHTYLKQTLTSVLSRMTPEEEEDSVVIVSVADTDESYLKSVVRMVKTKFRKQVQSGVLEVISIPTLFYPQTLLDKKTKTDSESWQIKQVLDFCILMLYAQPKATYYLQLEDDIVAKKMYFTKMKDFVNSLTSKNWFFIEFSVLGFIGKLFRSKDLTDFVHFFLMFYETKPIDILLDDIFLIRVCISGEPVRSCLQRKKGFRIQYRPSLFQHVGTQSSFPGREQHLKDNYY</sequence>
<comment type="function">
    <molecule>Isoform 2</molecule>
    <text evidence="3 4">May play a role in male spermatogenesis. In vitro acts as inhibitor of MGAT1 activity causing cell surface proteins to carry mainly high mannose N-glycans. The function is mediated by its lumenal domain and occurs specifically in the Golgi. A catalytic glucosyltransferase activity is not detected. May be involved in regulation of Sertoli-germ cell interactions during specific stages of spermatogenesis.</text>
</comment>
<comment type="subunit">
    <text evidence="3 4">Isoform 2 self-associates; specifically in the endoplasmic reticulum prior to its translocation to the Golgi. Isoform 1 and isoform 2 interact with MGAT1, MGAT3 and MAN2A2; isoform 2 interacts specifically with MGAT1 in the Golgi.</text>
</comment>
<comment type="subcellular location">
    <molecule>Isoform 2</molecule>
    <subcellularLocation>
        <location evidence="3">Endoplasmic reticulum membrane</location>
        <topology evidence="7">Single-pass type II membrane protein</topology>
    </subcellularLocation>
    <subcellularLocation>
        <location evidence="3">Endoplasmic reticulum-Golgi intermediate compartment membrane</location>
        <topology evidence="7">Single-pass type II membrane protein</topology>
    </subcellularLocation>
    <subcellularLocation>
        <location evidence="3">Golgi apparatus membrane</location>
        <topology evidence="7">Single-pass type II membrane protein</topology>
    </subcellularLocation>
</comment>
<comment type="subcellular location">
    <molecule>Isoform 1</molecule>
    <subcellularLocation>
        <location evidence="1">Golgi apparatus membrane</location>
        <topology evidence="1">Single-pass type II membrane protein</topology>
    </subcellularLocation>
</comment>
<comment type="alternative products">
    <event type="alternative splicing"/>
    <isoform>
        <id>Q9D4R2-1</id>
        <name>1</name>
        <name>GnT1IP-S</name>
        <sequence type="displayed"/>
    </isoform>
    <isoform>
        <id>Q9D4R2-2</id>
        <name>2</name>
        <name>GnT1IP-L</name>
        <sequence type="described" ref="VSP_058925"/>
    </isoform>
</comment>
<comment type="tissue specificity">
    <text evidence="3">Isoform 1 and isoform 2 are specifically expressed in testis. Isoform 2 is expressed in spermatocytes but not in spermatids. Isoform 1 is expressed in spermatids.</text>
</comment>
<comment type="developmental stage">
    <text evidence="3">Expression of isoform 1 and isoform 2 is up-regulated in testis at postnatal day 17; isoform 1 maintains similar expression levels until the adult; expression of isoform 2 peaks at postnatal day 22 and is barely detected in the adult.</text>
</comment>
<comment type="PTM">
    <text evidence="3">Isoform 2 is N-glycosylated; consisting of high-mannose and/or hybrid glycans.</text>
</comment>
<comment type="miscellaneous">
    <text evidence="7 8">For isoform 1 inhibition of MGAT1 activity is demonstrated in vitro upon forced membrane-association. Its rat ortholog is the most abundant protein in testis Golgi preparations.</text>
</comment>
<comment type="similarity">
    <text evidence="6">Belongs to the glycosyltransferase 54 family.</text>
</comment>
<comment type="online information" name="Functional Glycomics Gateway - GTase">
    <link uri="http://www.functionalglycomics.org/glycomics/molecule/jsp/glycoEnzyme/viewGlycoEnzyme.jsp?gbpId=gt_mou_582"/>
    <text>GlcNAcT VI</text>
</comment>
<accession>Q9D4R2</accession>
<accession>E2F697</accession>
<accession>E9QM08</accession>
<keyword id="KW-0025">Alternative splicing</keyword>
<keyword id="KW-0221">Differentiation</keyword>
<keyword id="KW-0256">Endoplasmic reticulum</keyword>
<keyword id="KW-0325">Glycoprotein</keyword>
<keyword id="KW-0333">Golgi apparatus</keyword>
<keyword id="KW-0472">Membrane</keyword>
<keyword id="KW-1185">Reference proteome</keyword>
<keyword id="KW-0735">Signal-anchor</keyword>
<keyword id="KW-0744">Spermatogenesis</keyword>
<keyword id="KW-0812">Transmembrane</keyword>
<keyword id="KW-1133">Transmembrane helix</keyword>
<evidence type="ECO:0000250" key="1">
    <source>
        <dbReference type="UniProtKB" id="Q4V8F8"/>
    </source>
</evidence>
<evidence type="ECO:0000255" key="2"/>
<evidence type="ECO:0000269" key="3">
    <source>
    </source>
</evidence>
<evidence type="ECO:0000269" key="4">
    <source>
    </source>
</evidence>
<evidence type="ECO:0000303" key="5">
    <source>
    </source>
</evidence>
<evidence type="ECO:0000305" key="6"/>
<evidence type="ECO:0000305" key="7">
    <source>
    </source>
</evidence>
<evidence type="ECO:0000305" key="8">
    <source>
    </source>
</evidence>
<evidence type="ECO:0000312" key="9">
    <source>
        <dbReference type="MGI" id="MGI:1914805"/>
    </source>
</evidence>
<organism>
    <name type="scientific">Mus musculus</name>
    <name type="common">Mouse</name>
    <dbReference type="NCBI Taxonomy" id="10090"/>
    <lineage>
        <taxon>Eukaryota</taxon>
        <taxon>Metazoa</taxon>
        <taxon>Chordata</taxon>
        <taxon>Craniata</taxon>
        <taxon>Vertebrata</taxon>
        <taxon>Euteleostomi</taxon>
        <taxon>Mammalia</taxon>
        <taxon>Eutheria</taxon>
        <taxon>Euarchontoglires</taxon>
        <taxon>Glires</taxon>
        <taxon>Rodentia</taxon>
        <taxon>Myomorpha</taxon>
        <taxon>Muroidea</taxon>
        <taxon>Muridae</taxon>
        <taxon>Murinae</taxon>
        <taxon>Mus</taxon>
        <taxon>Mus</taxon>
    </lineage>
</organism>
<reference key="1">
    <citation type="journal article" date="2010" name="J. Cell Biol.">
        <title>A testis-specific regulator of complex and hybrid N-glycan synthesis.</title>
        <authorList>
            <person name="Huang H.H."/>
            <person name="Stanley P."/>
        </authorList>
    </citation>
    <scope>NUCLEOTIDE SEQUENCE [MRNA] (ISOFORM 2)</scope>
    <scope>FUNCTION (ISOFORM 2)</scope>
    <scope>TISSUE SPECIFICITY</scope>
    <scope>SUBCELLULAR LOCATION</scope>
    <scope>INTERACTION WITH MGAT1; MGAT3 AND MAN2A2</scope>
    <scope>DEVELOPMENTAL STAGE</scope>
    <scope>GLYCOSYLATION</scope>
    <source>
        <strain>C57BL/6J</strain>
        <tissue>Testis</tissue>
    </source>
</reference>
<reference key="2">
    <citation type="journal article" date="2005" name="Science">
        <title>The transcriptional landscape of the mammalian genome.</title>
        <authorList>
            <person name="Carninci P."/>
            <person name="Kasukawa T."/>
            <person name="Katayama S."/>
            <person name="Gough J."/>
            <person name="Frith M.C."/>
            <person name="Maeda N."/>
            <person name="Oyama R."/>
            <person name="Ravasi T."/>
            <person name="Lenhard B."/>
            <person name="Wells C."/>
            <person name="Kodzius R."/>
            <person name="Shimokawa K."/>
            <person name="Bajic V.B."/>
            <person name="Brenner S.E."/>
            <person name="Batalov S."/>
            <person name="Forrest A.R."/>
            <person name="Zavolan M."/>
            <person name="Davis M.J."/>
            <person name="Wilming L.G."/>
            <person name="Aidinis V."/>
            <person name="Allen J.E."/>
            <person name="Ambesi-Impiombato A."/>
            <person name="Apweiler R."/>
            <person name="Aturaliya R.N."/>
            <person name="Bailey T.L."/>
            <person name="Bansal M."/>
            <person name="Baxter L."/>
            <person name="Beisel K.W."/>
            <person name="Bersano T."/>
            <person name="Bono H."/>
            <person name="Chalk A.M."/>
            <person name="Chiu K.P."/>
            <person name="Choudhary V."/>
            <person name="Christoffels A."/>
            <person name="Clutterbuck D.R."/>
            <person name="Crowe M.L."/>
            <person name="Dalla E."/>
            <person name="Dalrymple B.P."/>
            <person name="de Bono B."/>
            <person name="Della Gatta G."/>
            <person name="di Bernardo D."/>
            <person name="Down T."/>
            <person name="Engstrom P."/>
            <person name="Fagiolini M."/>
            <person name="Faulkner G."/>
            <person name="Fletcher C.F."/>
            <person name="Fukushima T."/>
            <person name="Furuno M."/>
            <person name="Futaki S."/>
            <person name="Gariboldi M."/>
            <person name="Georgii-Hemming P."/>
            <person name="Gingeras T.R."/>
            <person name="Gojobori T."/>
            <person name="Green R.E."/>
            <person name="Gustincich S."/>
            <person name="Harbers M."/>
            <person name="Hayashi Y."/>
            <person name="Hensch T.K."/>
            <person name="Hirokawa N."/>
            <person name="Hill D."/>
            <person name="Huminiecki L."/>
            <person name="Iacono M."/>
            <person name="Ikeo K."/>
            <person name="Iwama A."/>
            <person name="Ishikawa T."/>
            <person name="Jakt M."/>
            <person name="Kanapin A."/>
            <person name="Katoh M."/>
            <person name="Kawasawa Y."/>
            <person name="Kelso J."/>
            <person name="Kitamura H."/>
            <person name="Kitano H."/>
            <person name="Kollias G."/>
            <person name="Krishnan S.P."/>
            <person name="Kruger A."/>
            <person name="Kummerfeld S.K."/>
            <person name="Kurochkin I.V."/>
            <person name="Lareau L.F."/>
            <person name="Lazarevic D."/>
            <person name="Lipovich L."/>
            <person name="Liu J."/>
            <person name="Liuni S."/>
            <person name="McWilliam S."/>
            <person name="Madan Babu M."/>
            <person name="Madera M."/>
            <person name="Marchionni L."/>
            <person name="Matsuda H."/>
            <person name="Matsuzawa S."/>
            <person name="Miki H."/>
            <person name="Mignone F."/>
            <person name="Miyake S."/>
            <person name="Morris K."/>
            <person name="Mottagui-Tabar S."/>
            <person name="Mulder N."/>
            <person name="Nakano N."/>
            <person name="Nakauchi H."/>
            <person name="Ng P."/>
            <person name="Nilsson R."/>
            <person name="Nishiguchi S."/>
            <person name="Nishikawa S."/>
            <person name="Nori F."/>
            <person name="Ohara O."/>
            <person name="Okazaki Y."/>
            <person name="Orlando V."/>
            <person name="Pang K.C."/>
            <person name="Pavan W.J."/>
            <person name="Pavesi G."/>
            <person name="Pesole G."/>
            <person name="Petrovsky N."/>
            <person name="Piazza S."/>
            <person name="Reed J."/>
            <person name="Reid J.F."/>
            <person name="Ring B.Z."/>
            <person name="Ringwald M."/>
            <person name="Rost B."/>
            <person name="Ruan Y."/>
            <person name="Salzberg S.L."/>
            <person name="Sandelin A."/>
            <person name="Schneider C."/>
            <person name="Schoenbach C."/>
            <person name="Sekiguchi K."/>
            <person name="Semple C.A."/>
            <person name="Seno S."/>
            <person name="Sessa L."/>
            <person name="Sheng Y."/>
            <person name="Shibata Y."/>
            <person name="Shimada H."/>
            <person name="Shimada K."/>
            <person name="Silva D."/>
            <person name="Sinclair B."/>
            <person name="Sperling S."/>
            <person name="Stupka E."/>
            <person name="Sugiura K."/>
            <person name="Sultana R."/>
            <person name="Takenaka Y."/>
            <person name="Taki K."/>
            <person name="Tammoja K."/>
            <person name="Tan S.L."/>
            <person name="Tang S."/>
            <person name="Taylor M.S."/>
            <person name="Tegner J."/>
            <person name="Teichmann S.A."/>
            <person name="Ueda H.R."/>
            <person name="van Nimwegen E."/>
            <person name="Verardo R."/>
            <person name="Wei C.L."/>
            <person name="Yagi K."/>
            <person name="Yamanishi H."/>
            <person name="Zabarovsky E."/>
            <person name="Zhu S."/>
            <person name="Zimmer A."/>
            <person name="Hide W."/>
            <person name="Bult C."/>
            <person name="Grimmond S.M."/>
            <person name="Teasdale R.D."/>
            <person name="Liu E.T."/>
            <person name="Brusic V."/>
            <person name="Quackenbush J."/>
            <person name="Wahlestedt C."/>
            <person name="Mattick J.S."/>
            <person name="Hume D.A."/>
            <person name="Kai C."/>
            <person name="Sasaki D."/>
            <person name="Tomaru Y."/>
            <person name="Fukuda S."/>
            <person name="Kanamori-Katayama M."/>
            <person name="Suzuki M."/>
            <person name="Aoki J."/>
            <person name="Arakawa T."/>
            <person name="Iida J."/>
            <person name="Imamura K."/>
            <person name="Itoh M."/>
            <person name="Kato T."/>
            <person name="Kawaji H."/>
            <person name="Kawagashira N."/>
            <person name="Kawashima T."/>
            <person name="Kojima M."/>
            <person name="Kondo S."/>
            <person name="Konno H."/>
            <person name="Nakano K."/>
            <person name="Ninomiya N."/>
            <person name="Nishio T."/>
            <person name="Okada M."/>
            <person name="Plessy C."/>
            <person name="Shibata K."/>
            <person name="Shiraki T."/>
            <person name="Suzuki S."/>
            <person name="Tagami M."/>
            <person name="Waki K."/>
            <person name="Watahiki A."/>
            <person name="Okamura-Oho Y."/>
            <person name="Suzuki H."/>
            <person name="Kawai J."/>
            <person name="Hayashizaki Y."/>
        </authorList>
    </citation>
    <scope>NUCLEOTIDE SEQUENCE [LARGE SCALE MRNA] (ISOFORM 1)</scope>
    <source>
        <strain>C57BL/6J</strain>
        <tissue>Testis</tissue>
    </source>
</reference>
<reference key="3">
    <citation type="journal article" date="2009" name="PLoS Biol.">
        <title>Lineage-specific biology revealed by a finished genome assembly of the mouse.</title>
        <authorList>
            <person name="Church D.M."/>
            <person name="Goodstadt L."/>
            <person name="Hillier L.W."/>
            <person name="Zody M.C."/>
            <person name="Goldstein S."/>
            <person name="She X."/>
            <person name="Bult C.J."/>
            <person name="Agarwala R."/>
            <person name="Cherry J.L."/>
            <person name="DiCuccio M."/>
            <person name="Hlavina W."/>
            <person name="Kapustin Y."/>
            <person name="Meric P."/>
            <person name="Maglott D."/>
            <person name="Birtle Z."/>
            <person name="Marques A.C."/>
            <person name="Graves T."/>
            <person name="Zhou S."/>
            <person name="Teague B."/>
            <person name="Potamousis K."/>
            <person name="Churas C."/>
            <person name="Place M."/>
            <person name="Herschleb J."/>
            <person name="Runnheim R."/>
            <person name="Forrest D."/>
            <person name="Amos-Landgraf J."/>
            <person name="Schwartz D.C."/>
            <person name="Cheng Z."/>
            <person name="Lindblad-Toh K."/>
            <person name="Eichler E.E."/>
            <person name="Ponting C.P."/>
        </authorList>
    </citation>
    <scope>NUCLEOTIDE SEQUENCE [LARGE SCALE GENOMIC DNA]</scope>
    <source>
        <strain>C57BL/6J</strain>
    </source>
</reference>
<reference key="4">
    <citation type="journal article" date="2010" name="Cell">
        <title>A tissue-specific atlas of mouse protein phosphorylation and expression.</title>
        <authorList>
            <person name="Huttlin E.L."/>
            <person name="Jedrychowski M.P."/>
            <person name="Elias J.E."/>
            <person name="Goswami T."/>
            <person name="Rad R."/>
            <person name="Beausoleil S.A."/>
            <person name="Villen J."/>
            <person name="Haas W."/>
            <person name="Sowa M.E."/>
            <person name="Gygi S.P."/>
        </authorList>
    </citation>
    <scope>IDENTIFICATION BY MASS SPECTROMETRY [LARGE SCALE ANALYSIS]</scope>
    <source>
        <tissue>Testis</tissue>
    </source>
</reference>
<reference key="5">
    <citation type="journal article" date="2015" name="Elife">
        <title>GnT1IP-L specifically inhibits MGAT1 in the Golgi via its luminal domain.</title>
        <authorList>
            <person name="Huang H.H."/>
            <person name="Hassinen A."/>
            <person name="Sundaram S."/>
            <person name="Spiess A.N."/>
            <person name="Kellokumpu S."/>
            <person name="Stanley P."/>
        </authorList>
    </citation>
    <scope>FUNCTION (ISOFORM 2)</scope>
    <scope>INTERACTION WITH MGAT1</scope>
    <scope>SUBCELLULAR LOCATION</scope>
    <scope>SELF-ASSOCIATION</scope>
</reference>